<comment type="function">
    <text evidence="1">This protein binds to the 23S rRNA, and is important in its secondary structure. It is located near the subunit interface in the base of the L7/L12 stalk, and near the tRNA binding site of the peptidyltransferase center.</text>
</comment>
<comment type="subunit">
    <text evidence="1">Part of the 50S ribosomal subunit.</text>
</comment>
<comment type="similarity">
    <text evidence="1">Belongs to the universal ribosomal protein uL6 family.</text>
</comment>
<dbReference type="EMBL" id="CP000053">
    <property type="protein sequence ID" value="AAY61144.1"/>
    <property type="molecule type" value="Genomic_DNA"/>
</dbReference>
<dbReference type="SMR" id="Q4UMR4"/>
<dbReference type="STRING" id="315456.RF_0293"/>
<dbReference type="KEGG" id="rfe:RF_0293"/>
<dbReference type="eggNOG" id="COG0097">
    <property type="taxonomic scope" value="Bacteria"/>
</dbReference>
<dbReference type="HOGENOM" id="CLU_065464_1_2_5"/>
<dbReference type="OrthoDB" id="9805007at2"/>
<dbReference type="Proteomes" id="UP000008548">
    <property type="component" value="Chromosome"/>
</dbReference>
<dbReference type="GO" id="GO:1990904">
    <property type="term" value="C:ribonucleoprotein complex"/>
    <property type="evidence" value="ECO:0007669"/>
    <property type="project" value="UniProtKB-KW"/>
</dbReference>
<dbReference type="GO" id="GO:0005840">
    <property type="term" value="C:ribosome"/>
    <property type="evidence" value="ECO:0007669"/>
    <property type="project" value="UniProtKB-KW"/>
</dbReference>
<dbReference type="GO" id="GO:0019843">
    <property type="term" value="F:rRNA binding"/>
    <property type="evidence" value="ECO:0007669"/>
    <property type="project" value="UniProtKB-UniRule"/>
</dbReference>
<dbReference type="GO" id="GO:0003735">
    <property type="term" value="F:structural constituent of ribosome"/>
    <property type="evidence" value="ECO:0007669"/>
    <property type="project" value="InterPro"/>
</dbReference>
<dbReference type="GO" id="GO:0002181">
    <property type="term" value="P:cytoplasmic translation"/>
    <property type="evidence" value="ECO:0007669"/>
    <property type="project" value="TreeGrafter"/>
</dbReference>
<dbReference type="FunFam" id="3.90.930.12:FF:000002">
    <property type="entry name" value="50S ribosomal protein L6"/>
    <property type="match status" value="1"/>
</dbReference>
<dbReference type="Gene3D" id="3.90.930.12">
    <property type="entry name" value="Ribosomal protein L6, alpha-beta domain"/>
    <property type="match status" value="2"/>
</dbReference>
<dbReference type="HAMAP" id="MF_01365_B">
    <property type="entry name" value="Ribosomal_uL6_B"/>
    <property type="match status" value="1"/>
</dbReference>
<dbReference type="InterPro" id="IPR000702">
    <property type="entry name" value="Ribosomal_uL6-like"/>
</dbReference>
<dbReference type="InterPro" id="IPR036789">
    <property type="entry name" value="Ribosomal_uL6-like_a/b-dom_sf"/>
</dbReference>
<dbReference type="InterPro" id="IPR020040">
    <property type="entry name" value="Ribosomal_uL6_a/b-dom"/>
</dbReference>
<dbReference type="InterPro" id="IPR019906">
    <property type="entry name" value="Ribosomal_uL6_bac-type"/>
</dbReference>
<dbReference type="InterPro" id="IPR002358">
    <property type="entry name" value="Ribosomal_uL6_CS"/>
</dbReference>
<dbReference type="NCBIfam" id="TIGR03654">
    <property type="entry name" value="L6_bact"/>
    <property type="match status" value="1"/>
</dbReference>
<dbReference type="PANTHER" id="PTHR11655">
    <property type="entry name" value="60S/50S RIBOSOMAL PROTEIN L6/L9"/>
    <property type="match status" value="1"/>
</dbReference>
<dbReference type="PANTHER" id="PTHR11655:SF14">
    <property type="entry name" value="LARGE RIBOSOMAL SUBUNIT PROTEIN UL6M"/>
    <property type="match status" value="1"/>
</dbReference>
<dbReference type="Pfam" id="PF00347">
    <property type="entry name" value="Ribosomal_L6"/>
    <property type="match status" value="2"/>
</dbReference>
<dbReference type="PIRSF" id="PIRSF002162">
    <property type="entry name" value="Ribosomal_L6"/>
    <property type="match status" value="1"/>
</dbReference>
<dbReference type="PRINTS" id="PR00059">
    <property type="entry name" value="RIBOSOMALL6"/>
</dbReference>
<dbReference type="SUPFAM" id="SSF56053">
    <property type="entry name" value="Ribosomal protein L6"/>
    <property type="match status" value="2"/>
</dbReference>
<dbReference type="PROSITE" id="PS00525">
    <property type="entry name" value="RIBOSOMAL_L6_1"/>
    <property type="match status" value="1"/>
</dbReference>
<reference key="1">
    <citation type="journal article" date="2005" name="PLoS Biol.">
        <title>The genome sequence of Rickettsia felis identifies the first putative conjugative plasmid in an obligate intracellular parasite.</title>
        <authorList>
            <person name="Ogata H."/>
            <person name="Renesto P."/>
            <person name="Audic S."/>
            <person name="Robert C."/>
            <person name="Blanc G."/>
            <person name="Fournier P.-E."/>
            <person name="Parinello H."/>
            <person name="Claverie J.-M."/>
            <person name="Raoult D."/>
        </authorList>
    </citation>
    <scope>NUCLEOTIDE SEQUENCE [LARGE SCALE GENOMIC DNA]</scope>
    <source>
        <strain>ATCC VR-1525 / URRWXCal2</strain>
    </source>
</reference>
<feature type="chain" id="PRO_0000265287" description="Large ribosomal subunit protein uL6">
    <location>
        <begin position="1"/>
        <end position="177"/>
    </location>
</feature>
<name>RL6_RICFE</name>
<organism>
    <name type="scientific">Rickettsia felis (strain ATCC VR-1525 / URRWXCal2)</name>
    <name type="common">Rickettsia azadi</name>
    <dbReference type="NCBI Taxonomy" id="315456"/>
    <lineage>
        <taxon>Bacteria</taxon>
        <taxon>Pseudomonadati</taxon>
        <taxon>Pseudomonadota</taxon>
        <taxon>Alphaproteobacteria</taxon>
        <taxon>Rickettsiales</taxon>
        <taxon>Rickettsiaceae</taxon>
        <taxon>Rickettsieae</taxon>
        <taxon>Rickettsia</taxon>
        <taxon>spotted fever group</taxon>
    </lineage>
</organism>
<proteinExistence type="inferred from homology"/>
<protein>
    <recommendedName>
        <fullName evidence="1">Large ribosomal subunit protein uL6</fullName>
    </recommendedName>
    <alternativeName>
        <fullName evidence="2">50S ribosomal protein L6</fullName>
    </alternativeName>
</protein>
<accession>Q4UMR4</accession>
<sequence>MSRVGKLPITIPEGVKVGLNDLEVKISGPKGELSKTFKGNIAISLEENKLLVKPLAANKNARAMWGTARSIISNMVTGVKEGFKLKLEINGVGYRAMVKGKYLNLMLAKSHNTKIEIPSDIKIEVPKQNIIILEGTDKEKLGQFASIIIKQRPPEPYKGKGIKFENQFIPRKEGKKN</sequence>
<evidence type="ECO:0000255" key="1">
    <source>
        <dbReference type="HAMAP-Rule" id="MF_01365"/>
    </source>
</evidence>
<evidence type="ECO:0000305" key="2"/>
<gene>
    <name evidence="1" type="primary">rplF</name>
    <name type="ordered locus">RF_0293</name>
</gene>
<keyword id="KW-0687">Ribonucleoprotein</keyword>
<keyword id="KW-0689">Ribosomal protein</keyword>
<keyword id="KW-0694">RNA-binding</keyword>
<keyword id="KW-0699">rRNA-binding</keyword>